<keyword id="KW-0067">ATP-binding</keyword>
<keyword id="KW-0227">DNA damage</keyword>
<keyword id="KW-0233">DNA recombination</keyword>
<keyword id="KW-0234">DNA repair</keyword>
<keyword id="KW-0238">DNA-binding</keyword>
<keyword id="KW-0347">Helicase</keyword>
<keyword id="KW-0378">Hydrolase</keyword>
<keyword id="KW-0413">Isomerase</keyword>
<keyword id="KW-0496">Mitochondrion</keyword>
<keyword id="KW-0547">Nucleotide-binding</keyword>
<keyword id="KW-1185">Reference proteome</keyword>
<keyword id="KW-0809">Transit peptide</keyword>
<name>PIF5_TRYB2</name>
<evidence type="ECO:0000250" key="1"/>
<evidence type="ECO:0000250" key="2">
    <source>
        <dbReference type="UniProtKB" id="Q9H611"/>
    </source>
</evidence>
<evidence type="ECO:0000255" key="3"/>
<evidence type="ECO:0000256" key="4">
    <source>
        <dbReference type="SAM" id="MobiDB-lite"/>
    </source>
</evidence>
<evidence type="ECO:0000269" key="5">
    <source>
    </source>
</evidence>
<evidence type="ECO:0000269" key="6">
    <source>
    </source>
</evidence>
<evidence type="ECO:0000303" key="7">
    <source>
    </source>
</evidence>
<evidence type="ECO:0000305" key="8"/>
<evidence type="ECO:0000312" key="9">
    <source>
        <dbReference type="Proteomes" id="UP000008524"/>
    </source>
</evidence>
<accession>Q580X6</accession>
<accession>D6XL91</accession>
<organism>
    <name type="scientific">Trypanosoma brucei brucei (strain 927/4 GUTat10.1)</name>
    <dbReference type="NCBI Taxonomy" id="185431"/>
    <lineage>
        <taxon>Eukaryota</taxon>
        <taxon>Discoba</taxon>
        <taxon>Euglenozoa</taxon>
        <taxon>Kinetoplastea</taxon>
        <taxon>Metakinetoplastina</taxon>
        <taxon>Trypanosomatida</taxon>
        <taxon>Trypanosomatidae</taxon>
        <taxon>Trypanosoma</taxon>
    </lineage>
</organism>
<dbReference type="EC" id="5.6.2.3" evidence="6"/>
<dbReference type="EMBL" id="AC092212">
    <property type="protein sequence ID" value="AAX78977.1"/>
    <property type="molecule type" value="Genomic_DNA"/>
</dbReference>
<dbReference type="EMBL" id="CP000071">
    <property type="protein sequence ID" value="AAZ13121.1"/>
    <property type="molecule type" value="Genomic_DNA"/>
</dbReference>
<dbReference type="RefSeq" id="XP_847187.1">
    <property type="nucleotide sequence ID" value="XM_842094.1"/>
</dbReference>
<dbReference type="SMR" id="Q580X6"/>
<dbReference type="STRING" id="185431.Q580X6"/>
<dbReference type="PaxDb" id="5691-AAZ13121"/>
<dbReference type="GeneID" id="3659361"/>
<dbReference type="KEGG" id="tbr:Tb927.8.3560"/>
<dbReference type="VEuPathDB" id="TriTrypDB:Tb927.8.3560"/>
<dbReference type="eggNOG" id="KOG0987">
    <property type="taxonomic scope" value="Eukaryota"/>
</dbReference>
<dbReference type="InParanoid" id="Q580X6"/>
<dbReference type="OMA" id="VYGNTHC"/>
<dbReference type="OrthoDB" id="432234at2759"/>
<dbReference type="Proteomes" id="UP000008524">
    <property type="component" value="Chromosome 8"/>
</dbReference>
<dbReference type="GO" id="GO:0005737">
    <property type="term" value="C:cytoplasm"/>
    <property type="evidence" value="ECO:0000314"/>
    <property type="project" value="GeneDB"/>
</dbReference>
<dbReference type="GO" id="GO:0005739">
    <property type="term" value="C:mitochondrion"/>
    <property type="evidence" value="ECO:0000314"/>
    <property type="project" value="GeneDB"/>
</dbReference>
<dbReference type="GO" id="GO:0031981">
    <property type="term" value="C:nuclear lumen"/>
    <property type="evidence" value="ECO:0000318"/>
    <property type="project" value="GO_Central"/>
</dbReference>
<dbReference type="GO" id="GO:0005730">
    <property type="term" value="C:nucleolus"/>
    <property type="evidence" value="ECO:0000314"/>
    <property type="project" value="GeneDB"/>
</dbReference>
<dbReference type="GO" id="GO:0005654">
    <property type="term" value="C:nucleoplasm"/>
    <property type="evidence" value="ECO:0000314"/>
    <property type="project" value="GeneDB"/>
</dbReference>
<dbReference type="GO" id="GO:0043139">
    <property type="term" value="F:5'-3' DNA helicase activity"/>
    <property type="evidence" value="ECO:0000314"/>
    <property type="project" value="GeneDB"/>
</dbReference>
<dbReference type="GO" id="GO:0005524">
    <property type="term" value="F:ATP binding"/>
    <property type="evidence" value="ECO:0007669"/>
    <property type="project" value="UniProtKB-KW"/>
</dbReference>
<dbReference type="GO" id="GO:0016887">
    <property type="term" value="F:ATP hydrolysis activity"/>
    <property type="evidence" value="ECO:0007669"/>
    <property type="project" value="InterPro"/>
</dbReference>
<dbReference type="GO" id="GO:0003677">
    <property type="term" value="F:DNA binding"/>
    <property type="evidence" value="ECO:0007669"/>
    <property type="project" value="UniProtKB-KW"/>
</dbReference>
<dbReference type="GO" id="GO:0006310">
    <property type="term" value="P:DNA recombination"/>
    <property type="evidence" value="ECO:0007669"/>
    <property type="project" value="UniProtKB-KW"/>
</dbReference>
<dbReference type="GO" id="GO:0006281">
    <property type="term" value="P:DNA repair"/>
    <property type="evidence" value="ECO:0007669"/>
    <property type="project" value="UniProtKB-KW"/>
</dbReference>
<dbReference type="GO" id="GO:0033567">
    <property type="term" value="P:DNA replication, Okazaki fragment processing"/>
    <property type="evidence" value="ECO:0000314"/>
    <property type="project" value="GeneDB"/>
</dbReference>
<dbReference type="GO" id="GO:0043137">
    <property type="term" value="P:DNA replication, removal of RNA primer"/>
    <property type="evidence" value="ECO:0000304"/>
    <property type="project" value="GeneDB"/>
</dbReference>
<dbReference type="GO" id="GO:0000723">
    <property type="term" value="P:telomere maintenance"/>
    <property type="evidence" value="ECO:0007669"/>
    <property type="project" value="InterPro"/>
</dbReference>
<dbReference type="CDD" id="cd18037">
    <property type="entry name" value="DEXSc_Pif1_like"/>
    <property type="match status" value="1"/>
</dbReference>
<dbReference type="CDD" id="cd18809">
    <property type="entry name" value="SF1_C_RecD"/>
    <property type="match status" value="1"/>
</dbReference>
<dbReference type="Gene3D" id="3.40.50.300">
    <property type="entry name" value="P-loop containing nucleotide triphosphate hydrolases"/>
    <property type="match status" value="1"/>
</dbReference>
<dbReference type="InterPro" id="IPR003593">
    <property type="entry name" value="AAA+_ATPase"/>
</dbReference>
<dbReference type="InterPro" id="IPR010285">
    <property type="entry name" value="DNA_helicase_pif1-like_DEAD"/>
</dbReference>
<dbReference type="InterPro" id="IPR027417">
    <property type="entry name" value="P-loop_NTPase"/>
</dbReference>
<dbReference type="InterPro" id="IPR049163">
    <property type="entry name" value="Pif1-like_2B_dom"/>
</dbReference>
<dbReference type="InterPro" id="IPR051055">
    <property type="entry name" value="PIF1_helicase"/>
</dbReference>
<dbReference type="PANTHER" id="PTHR47642">
    <property type="entry name" value="ATP-DEPENDENT DNA HELICASE"/>
    <property type="match status" value="1"/>
</dbReference>
<dbReference type="Pfam" id="PF05970">
    <property type="entry name" value="PIF1"/>
    <property type="match status" value="1"/>
</dbReference>
<dbReference type="Pfam" id="PF21530">
    <property type="entry name" value="Pif1_2B_dom"/>
    <property type="match status" value="1"/>
</dbReference>
<dbReference type="SMART" id="SM00382">
    <property type="entry name" value="AAA"/>
    <property type="match status" value="1"/>
</dbReference>
<dbReference type="SUPFAM" id="SSF52540">
    <property type="entry name" value="P-loop containing nucleoside triphosphate hydrolases"/>
    <property type="match status" value="2"/>
</dbReference>
<protein>
    <recommendedName>
        <fullName evidence="7">ATP-dependent DNA helicase PIF5</fullName>
        <ecNumber evidence="6">5.6.2.3</ecNumber>
    </recommendedName>
    <alternativeName>
        <fullName evidence="8">DNA 5'-3' helicase PIF5</fullName>
    </alternativeName>
    <alternativeName>
        <fullName>DNA repair and recombination helicase PIF5</fullName>
    </alternativeName>
</protein>
<gene>
    <name evidence="7" type="primary">PIF5</name>
    <name type="ORF">Tb927.8.3560</name>
</gene>
<proteinExistence type="evidence at protein level"/>
<sequence>MLSRLSAVWRPSRVALRIQRVDFTTCGNRLNRSTQPNEPPLVSGIAARSRTAKAEPVEKRGRAAIKIDSPPPPLEPPRISEEHMTRRRKVGGGKTKAAAVTKSKQRRSGRTVGASAFNTARRANGIEGSAPGKGGASDVAIDDDDDEKLVDEESKQLMQLLKEEALRREEEKKKRLRAKAAAEPTEVTDDKEYLSKLGVAERTQPVGTEAKISAQGKAEGASEGQTHFSDADADSQLPILTSLSPEQQRALRLALKGRNLFITGGAGSGKSLLIREIVYQLRHNKRRCVYVTATTGVAALNVRGSTVNSFAGVKFGDGDARQLLKWVRRSRRAAGRWRYCQTLIIDEISMMDPLLLDKLDVIARAIRRRNEPFGGIQVILCGDFLQLPPIPPRNKPQQKTEENAEAQEGGDPTDGTPAPSKLQYCFETSTWTSLNLITVILHKKFRQHDDLAFQQVLDELRVGSLSPESYELLLSRTVASKSSAKSRKKKDEDAGNDGVLPLTDAETTPAAAEKDRHVRLCATNKEVEMRNAKYFAALEPKGLPIYPSPNDGSSQQTGSSNGANSVTEEDTMRPLQVYRAYDAYSTHETEPETTEETTTGTQPSQPWVRFEDSTLPTDLALKVGTRVMVLQNISLRLGLVNGSVGEVVGFLHPLELVELVLRAPRERHFPSARGQELLERAGLPTLQDAFRCVDTALGQSLFYYLRERGIRRPEDASYGCVYGNTHCRDILRLVGLGKTESANAVHPLEMYLGGIAPQHVRLTRLPIVRLDLREGNHTSSDSGAVEDGGFANGSKRLPKHVYAFISPSSHQWYMGDQPVATRTQLPLRQAWAMTVHKAQGLTISHVEVAIHRFFSPGQAYVALSRSTRLDNIRLLDFNNASVHACPRAKEFYTVLEEEELDNEIEDDGTEGDEEALEGDGEYEGEVEE</sequence>
<comment type="function">
    <text evidence="6">DNA-dependent ATPase and 5'-3' DNA helicase required for the maintenance of mitochondrial (kinetoplast) genome stability. Involved in processing of minicircle Okazaki fragments.</text>
</comment>
<comment type="catalytic activity">
    <reaction evidence="6">
        <text>Couples ATP hydrolysis with the unwinding of duplex DNA at the replication fork by translocating in the 5'-3' direction. This creates two antiparallel DNA single strands (ssDNA). The leading ssDNA polymer is the template for DNA polymerase III holoenzyme which synthesizes a continuous strand.</text>
        <dbReference type="EC" id="5.6.2.3"/>
    </reaction>
</comment>
<comment type="catalytic activity">
    <reaction evidence="6">
        <text>ATP + H2O = ADP + phosphate + H(+)</text>
        <dbReference type="Rhea" id="RHEA:13065"/>
        <dbReference type="ChEBI" id="CHEBI:15377"/>
        <dbReference type="ChEBI" id="CHEBI:15378"/>
        <dbReference type="ChEBI" id="CHEBI:30616"/>
        <dbReference type="ChEBI" id="CHEBI:43474"/>
        <dbReference type="ChEBI" id="CHEBI:456216"/>
        <dbReference type="EC" id="5.6.2.3"/>
    </reaction>
</comment>
<comment type="cofactor">
    <cofactor evidence="6">
        <name>Mg(2+)</name>
        <dbReference type="ChEBI" id="CHEBI:18420"/>
    </cofactor>
</comment>
<comment type="subunit">
    <text evidence="1 2">Monomer.</text>
</comment>
<comment type="subcellular location">
    <subcellularLocation>
        <location evidence="5 6">Mitochondrion</location>
    </subcellularLocation>
    <text evidence="5 6">Enriched in the antipodal sites flanking the kDNA disk (PubMed:19646907, PubMed:19779567).</text>
</comment>
<comment type="disruption phenotype">
    <text evidence="6">Essential, it cannot be deleted.</text>
</comment>
<comment type="similarity">
    <text evidence="8">Belongs to the helicase family. PIF1 subfamily.</text>
</comment>
<reference key="1">
    <citation type="journal article" date="2005" name="Science">
        <title>The genome of the African trypanosome Trypanosoma brucei.</title>
        <authorList>
            <person name="Berriman M."/>
            <person name="Ghedin E."/>
            <person name="Hertz-Fowler C."/>
            <person name="Blandin G."/>
            <person name="Renauld H."/>
            <person name="Bartholomeu D.C."/>
            <person name="Lennard N.J."/>
            <person name="Caler E."/>
            <person name="Hamlin N.E."/>
            <person name="Haas B."/>
            <person name="Bohme U."/>
            <person name="Hannick L."/>
            <person name="Aslett M.A."/>
            <person name="Shallom J."/>
            <person name="Marcello L."/>
            <person name="Hou L."/>
            <person name="Wickstead B."/>
            <person name="Alsmark U.C.M."/>
            <person name="Arrowsmith C."/>
            <person name="Atkin R.J."/>
            <person name="Barron A.J."/>
            <person name="Bringaud F."/>
            <person name="Brooks K."/>
            <person name="Carrington M."/>
            <person name="Cherevach I."/>
            <person name="Chillingworth T.J."/>
            <person name="Churcher C."/>
            <person name="Clark L.N."/>
            <person name="Corton C.H."/>
            <person name="Cronin A."/>
            <person name="Davies R.M."/>
            <person name="Doggett J."/>
            <person name="Djikeng A."/>
            <person name="Feldblyum T."/>
            <person name="Field M.C."/>
            <person name="Fraser A."/>
            <person name="Goodhead I."/>
            <person name="Hance Z."/>
            <person name="Harper D."/>
            <person name="Harris B.R."/>
            <person name="Hauser H."/>
            <person name="Hostetler J."/>
            <person name="Ivens A."/>
            <person name="Jagels K."/>
            <person name="Johnson D."/>
            <person name="Johnson J."/>
            <person name="Jones K."/>
            <person name="Kerhornou A.X."/>
            <person name="Koo H."/>
            <person name="Larke N."/>
            <person name="Landfear S."/>
            <person name="Larkin C."/>
            <person name="Leech V."/>
            <person name="Line A."/>
            <person name="Lord A."/>
            <person name="Macleod A."/>
            <person name="Mooney P.J."/>
            <person name="Moule S."/>
            <person name="Martin D.M."/>
            <person name="Morgan G.W."/>
            <person name="Mungall K."/>
            <person name="Norbertczak H."/>
            <person name="Ormond D."/>
            <person name="Pai G."/>
            <person name="Peacock C.S."/>
            <person name="Peterson J."/>
            <person name="Quail M.A."/>
            <person name="Rabbinowitsch E."/>
            <person name="Rajandream M.A."/>
            <person name="Reitter C."/>
            <person name="Salzberg S.L."/>
            <person name="Sanders M."/>
            <person name="Schobel S."/>
            <person name="Sharp S."/>
            <person name="Simmonds M."/>
            <person name="Simpson A.J."/>
            <person name="Tallon L."/>
            <person name="Turner C.M."/>
            <person name="Tait A."/>
            <person name="Tivey A.R."/>
            <person name="Van Aken S."/>
            <person name="Walker D."/>
            <person name="Wanless D."/>
            <person name="Wang S."/>
            <person name="White B."/>
            <person name="White O."/>
            <person name="Whitehead S."/>
            <person name="Woodward J."/>
            <person name="Wortman J."/>
            <person name="Adams M.D."/>
            <person name="Embley T.M."/>
            <person name="Gull K."/>
            <person name="Ullu E."/>
            <person name="Barry J.D."/>
            <person name="Fairlamb A.H."/>
            <person name="Opperdoes F."/>
            <person name="Barrell B.G."/>
            <person name="Donelson J.E."/>
            <person name="Hall N."/>
            <person name="Fraser C.M."/>
            <person name="Melville S.E."/>
            <person name="El-Sayed N.M.A."/>
        </authorList>
    </citation>
    <scope>NUCLEOTIDE SEQUENCE [LARGE SCALE GENOMIC DNA]</scope>
    <source>
        <strain evidence="9">927/4 GUTat10.1</strain>
    </source>
</reference>
<reference key="2">
    <citation type="journal article" date="2009" name="Mol. Cell">
        <title>Trypanosomes have six mitochondrial DNA helicases with one controlling kinetoplast maxicircle replication.</title>
        <authorList>
            <person name="Liu B."/>
            <person name="Wang J."/>
            <person name="Yaffe N."/>
            <person name="Lindsay M.E."/>
            <person name="Zhao Z."/>
            <person name="Zick A."/>
            <person name="Shlomai J."/>
            <person name="Englund P.T."/>
        </authorList>
    </citation>
    <scope>SUBCELLULAR LOCATION</scope>
</reference>
<reference key="3">
    <citation type="journal article" date="2009" name="PLoS Pathog.">
        <title>TbPIF5 is a Trypanosoma brucei mitochondrial DNA helicase involved in processing of minicircle Okazaki fragments.</title>
        <authorList>
            <person name="Liu B."/>
            <person name="Wang J."/>
            <person name="Yildirir G."/>
            <person name="Englund P.T."/>
        </authorList>
    </citation>
    <scope>FUNCTION</scope>
    <scope>CATALYTIC ACTIVITY</scope>
    <scope>COFACTOR</scope>
    <scope>SUBCELLULAR LOCATION</scope>
    <scope>DISRUPTION PHENOTYPE</scope>
</reference>
<feature type="transit peptide" description="Mitochondrion" evidence="3">
    <location>
        <begin position="1"/>
        <end position="49"/>
    </location>
</feature>
<feature type="chain" id="PRO_0000423751" description="ATP-dependent DNA helicase PIF5">
    <location>
        <begin position="50"/>
        <end position="928"/>
    </location>
</feature>
<feature type="DNA-binding region" evidence="3">
    <location>
        <begin position="858"/>
        <end position="877"/>
    </location>
</feature>
<feature type="region of interest" description="Disordered" evidence="4">
    <location>
        <begin position="29"/>
        <end position="141"/>
    </location>
</feature>
<feature type="region of interest" description="Disordered" evidence="4">
    <location>
        <begin position="176"/>
        <end position="231"/>
    </location>
</feature>
<feature type="region of interest" description="Disordered" evidence="4">
    <location>
        <begin position="389"/>
        <end position="421"/>
    </location>
</feature>
<feature type="region of interest" description="Disordered" evidence="4">
    <location>
        <begin position="481"/>
        <end position="513"/>
    </location>
</feature>
<feature type="region of interest" description="Disordered" evidence="4">
    <location>
        <begin position="545"/>
        <end position="572"/>
    </location>
</feature>
<feature type="region of interest" description="Disordered" evidence="4">
    <location>
        <begin position="585"/>
        <end position="607"/>
    </location>
</feature>
<feature type="region of interest" description="Disordered" evidence="4">
    <location>
        <begin position="898"/>
        <end position="928"/>
    </location>
</feature>
<feature type="compositionally biased region" description="Basic and acidic residues" evidence="4">
    <location>
        <begin position="52"/>
        <end position="61"/>
    </location>
</feature>
<feature type="compositionally biased region" description="Polar residues" evidence="4">
    <location>
        <begin position="550"/>
        <end position="566"/>
    </location>
</feature>
<feature type="binding site" evidence="3">
    <location>
        <begin position="264"/>
        <end position="271"/>
    </location>
    <ligand>
        <name>ATP</name>
        <dbReference type="ChEBI" id="CHEBI:30616"/>
    </ligand>
</feature>